<feature type="chain" id="PRO_0000114351" description="Cell division protein FtsZ">
    <location>
        <begin position="1"/>
        <end position="383"/>
    </location>
</feature>
<feature type="binding site" evidence="1">
    <location>
        <begin position="20"/>
        <end position="24"/>
    </location>
    <ligand>
        <name>GTP</name>
        <dbReference type="ChEBI" id="CHEBI:37565"/>
    </ligand>
</feature>
<feature type="binding site" evidence="1">
    <location>
        <begin position="107"/>
        <end position="109"/>
    </location>
    <ligand>
        <name>GTP</name>
        <dbReference type="ChEBI" id="CHEBI:37565"/>
    </ligand>
</feature>
<feature type="binding site" evidence="1">
    <location>
        <position position="138"/>
    </location>
    <ligand>
        <name>GTP</name>
        <dbReference type="ChEBI" id="CHEBI:37565"/>
    </ligand>
</feature>
<feature type="binding site" evidence="1">
    <location>
        <position position="142"/>
    </location>
    <ligand>
        <name>GTP</name>
        <dbReference type="ChEBI" id="CHEBI:37565"/>
    </ligand>
</feature>
<feature type="binding site" evidence="1">
    <location>
        <position position="186"/>
    </location>
    <ligand>
        <name>GTP</name>
        <dbReference type="ChEBI" id="CHEBI:37565"/>
    </ligand>
</feature>
<sequence>MFEPMELTNDAVIKVIGVGGGGGNAVEHMVRERIEGVEFFAVNTDAQALRKTAVGQTIQIGSGITKGLGAGANPEVGRNAADEDRDALRAALEGADMVFIAAGMGGGTGTGAAPVVAEVAKDLGILTVAVVTKPFNFEGKKRMAFAEQGITELSKHVDSLITIPNDKLLKVLGRGISLLDAFGAANDVLKGAVQGIAELITRPGLMNVDFADVRTVMSEMGYAMMGSGVASGEDRAEEAAEMAISSPLLEDIDLSGARGVLVNITAGFDLRLDEFETVGNTIRAFASDNATVVIGTSLDPDMNDELRVTVVATGIGMDKRPEITLVTNKQVQQPVMDRYQQHGMAPLTQEQKPVAKVVNDNAPQTAKEPDYLDIPAFLRKQAD</sequence>
<keyword id="KW-0131">Cell cycle</keyword>
<keyword id="KW-0132">Cell division</keyword>
<keyword id="KW-0963">Cytoplasm</keyword>
<keyword id="KW-0342">GTP-binding</keyword>
<keyword id="KW-0547">Nucleotide-binding</keyword>
<keyword id="KW-1185">Reference proteome</keyword>
<keyword id="KW-0717">Septation</keyword>
<comment type="function">
    <text evidence="1">Essential cell division protein that forms a contractile ring structure (Z ring) at the future cell division site. The regulation of the ring assembly controls the timing and the location of cell division. One of the functions of the FtsZ ring is to recruit other cell division proteins to the septum to produce a new cell wall between the dividing cells. Binds GTP and shows GTPase activity.</text>
</comment>
<comment type="subunit">
    <text evidence="1">Homodimer. Polymerizes to form a dynamic ring structure in a strictly GTP-dependent manner. Interacts directly with several other division proteins.</text>
</comment>
<comment type="subcellular location">
    <subcellularLocation>
        <location evidence="1">Cytoplasm</location>
    </subcellularLocation>
    <text evidence="1">Assembles at midcell at the inner surface of the cytoplasmic membrane.</text>
</comment>
<comment type="similarity">
    <text evidence="1">Belongs to the FtsZ family.</text>
</comment>
<protein>
    <recommendedName>
        <fullName evidence="1">Cell division protein FtsZ</fullName>
    </recommendedName>
</protein>
<proteinExistence type="inferred from homology"/>
<dbReference type="EMBL" id="AE014075">
    <property type="protein sequence ID" value="AAN78611.1"/>
    <property type="molecule type" value="Genomic_DNA"/>
</dbReference>
<dbReference type="RefSeq" id="WP_000462776.1">
    <property type="nucleotide sequence ID" value="NZ_CP051263.1"/>
</dbReference>
<dbReference type="SMR" id="P0A9A7"/>
<dbReference type="STRING" id="199310.c0113"/>
<dbReference type="GeneID" id="93777339"/>
<dbReference type="KEGG" id="ecc:c0113"/>
<dbReference type="eggNOG" id="COG0206">
    <property type="taxonomic scope" value="Bacteria"/>
</dbReference>
<dbReference type="HOGENOM" id="CLU_024865_0_1_6"/>
<dbReference type="BioCyc" id="ECOL199310:C0113-MONOMER"/>
<dbReference type="Proteomes" id="UP000001410">
    <property type="component" value="Chromosome"/>
</dbReference>
<dbReference type="GO" id="GO:0032153">
    <property type="term" value="C:cell division site"/>
    <property type="evidence" value="ECO:0007669"/>
    <property type="project" value="UniProtKB-UniRule"/>
</dbReference>
<dbReference type="GO" id="GO:0005737">
    <property type="term" value="C:cytoplasm"/>
    <property type="evidence" value="ECO:0007669"/>
    <property type="project" value="UniProtKB-SubCell"/>
</dbReference>
<dbReference type="GO" id="GO:0005525">
    <property type="term" value="F:GTP binding"/>
    <property type="evidence" value="ECO:0007669"/>
    <property type="project" value="UniProtKB-UniRule"/>
</dbReference>
<dbReference type="GO" id="GO:0003924">
    <property type="term" value="F:GTPase activity"/>
    <property type="evidence" value="ECO:0007669"/>
    <property type="project" value="UniProtKB-UniRule"/>
</dbReference>
<dbReference type="GO" id="GO:0000917">
    <property type="term" value="P:division septum assembly"/>
    <property type="evidence" value="ECO:0007669"/>
    <property type="project" value="UniProtKB-KW"/>
</dbReference>
<dbReference type="GO" id="GO:0043093">
    <property type="term" value="P:FtsZ-dependent cytokinesis"/>
    <property type="evidence" value="ECO:0007669"/>
    <property type="project" value="UniProtKB-UniRule"/>
</dbReference>
<dbReference type="GO" id="GO:0051258">
    <property type="term" value="P:protein polymerization"/>
    <property type="evidence" value="ECO:0007669"/>
    <property type="project" value="UniProtKB-UniRule"/>
</dbReference>
<dbReference type="CDD" id="cd02201">
    <property type="entry name" value="FtsZ_type1"/>
    <property type="match status" value="1"/>
</dbReference>
<dbReference type="FunFam" id="3.30.1330.20:FF:000004">
    <property type="entry name" value="Cell division protein FtsZ"/>
    <property type="match status" value="1"/>
</dbReference>
<dbReference type="FunFam" id="3.40.50.1440:FF:000023">
    <property type="entry name" value="Cell division protein FtsZ"/>
    <property type="match status" value="1"/>
</dbReference>
<dbReference type="Gene3D" id="3.30.1330.20">
    <property type="entry name" value="Tubulin/FtsZ, C-terminal domain"/>
    <property type="match status" value="1"/>
</dbReference>
<dbReference type="Gene3D" id="3.40.50.1440">
    <property type="entry name" value="Tubulin/FtsZ, GTPase domain"/>
    <property type="match status" value="1"/>
</dbReference>
<dbReference type="HAMAP" id="MF_00909">
    <property type="entry name" value="FtsZ"/>
    <property type="match status" value="1"/>
</dbReference>
<dbReference type="InterPro" id="IPR000158">
    <property type="entry name" value="Cell_div_FtsZ"/>
</dbReference>
<dbReference type="InterPro" id="IPR020805">
    <property type="entry name" value="Cell_div_FtsZ_CS"/>
</dbReference>
<dbReference type="InterPro" id="IPR045061">
    <property type="entry name" value="FtsZ/CetZ"/>
</dbReference>
<dbReference type="InterPro" id="IPR024757">
    <property type="entry name" value="FtsZ_C"/>
</dbReference>
<dbReference type="InterPro" id="IPR008280">
    <property type="entry name" value="Tub_FtsZ_C"/>
</dbReference>
<dbReference type="InterPro" id="IPR037103">
    <property type="entry name" value="Tubulin/FtsZ-like_C"/>
</dbReference>
<dbReference type="InterPro" id="IPR018316">
    <property type="entry name" value="Tubulin/FtsZ_2-layer-sand-dom"/>
</dbReference>
<dbReference type="InterPro" id="IPR036525">
    <property type="entry name" value="Tubulin/FtsZ_GTPase_sf"/>
</dbReference>
<dbReference type="InterPro" id="IPR003008">
    <property type="entry name" value="Tubulin_FtsZ_GTPase"/>
</dbReference>
<dbReference type="NCBIfam" id="TIGR00065">
    <property type="entry name" value="ftsZ"/>
    <property type="match status" value="1"/>
</dbReference>
<dbReference type="PANTHER" id="PTHR30314">
    <property type="entry name" value="CELL DIVISION PROTEIN FTSZ-RELATED"/>
    <property type="match status" value="1"/>
</dbReference>
<dbReference type="PANTHER" id="PTHR30314:SF3">
    <property type="entry name" value="MITOCHONDRIAL DIVISION PROTEIN FSZA"/>
    <property type="match status" value="1"/>
</dbReference>
<dbReference type="Pfam" id="PF12327">
    <property type="entry name" value="FtsZ_C"/>
    <property type="match status" value="1"/>
</dbReference>
<dbReference type="Pfam" id="PF00091">
    <property type="entry name" value="Tubulin"/>
    <property type="match status" value="1"/>
</dbReference>
<dbReference type="PRINTS" id="PR00423">
    <property type="entry name" value="CELLDVISFTSZ"/>
</dbReference>
<dbReference type="SMART" id="SM00864">
    <property type="entry name" value="Tubulin"/>
    <property type="match status" value="1"/>
</dbReference>
<dbReference type="SMART" id="SM00865">
    <property type="entry name" value="Tubulin_C"/>
    <property type="match status" value="1"/>
</dbReference>
<dbReference type="SUPFAM" id="SSF55307">
    <property type="entry name" value="Tubulin C-terminal domain-like"/>
    <property type="match status" value="1"/>
</dbReference>
<dbReference type="SUPFAM" id="SSF52490">
    <property type="entry name" value="Tubulin nucleotide-binding domain-like"/>
    <property type="match status" value="1"/>
</dbReference>
<dbReference type="PROSITE" id="PS01134">
    <property type="entry name" value="FTSZ_1"/>
    <property type="match status" value="1"/>
</dbReference>
<dbReference type="PROSITE" id="PS01135">
    <property type="entry name" value="FTSZ_2"/>
    <property type="match status" value="1"/>
</dbReference>
<name>FTSZ_ECOL6</name>
<organism>
    <name type="scientific">Escherichia coli O6:H1 (strain CFT073 / ATCC 700928 / UPEC)</name>
    <dbReference type="NCBI Taxonomy" id="199310"/>
    <lineage>
        <taxon>Bacteria</taxon>
        <taxon>Pseudomonadati</taxon>
        <taxon>Pseudomonadota</taxon>
        <taxon>Gammaproteobacteria</taxon>
        <taxon>Enterobacterales</taxon>
        <taxon>Enterobacteriaceae</taxon>
        <taxon>Escherichia</taxon>
    </lineage>
</organism>
<accession>P0A9A7</accession>
<accession>P06138</accession>
<accession>P77857</accession>
<accession>P78047</accession>
<reference key="1">
    <citation type="journal article" date="2002" name="Proc. Natl. Acad. Sci. U.S.A.">
        <title>Extensive mosaic structure revealed by the complete genome sequence of uropathogenic Escherichia coli.</title>
        <authorList>
            <person name="Welch R.A."/>
            <person name="Burland V."/>
            <person name="Plunkett G. III"/>
            <person name="Redford P."/>
            <person name="Roesch P."/>
            <person name="Rasko D."/>
            <person name="Buckles E.L."/>
            <person name="Liou S.-R."/>
            <person name="Boutin A."/>
            <person name="Hackett J."/>
            <person name="Stroud D."/>
            <person name="Mayhew G.F."/>
            <person name="Rose D.J."/>
            <person name="Zhou S."/>
            <person name="Schwartz D.C."/>
            <person name="Perna N.T."/>
            <person name="Mobley H.L.T."/>
            <person name="Donnenberg M.S."/>
            <person name="Blattner F.R."/>
        </authorList>
    </citation>
    <scope>NUCLEOTIDE SEQUENCE [LARGE SCALE GENOMIC DNA]</scope>
    <source>
        <strain>CFT073 / ATCC 700928 / UPEC</strain>
    </source>
</reference>
<evidence type="ECO:0000255" key="1">
    <source>
        <dbReference type="HAMAP-Rule" id="MF_00909"/>
    </source>
</evidence>
<gene>
    <name evidence="1" type="primary">ftsZ</name>
    <name type="ordered locus">c0113</name>
</gene>